<evidence type="ECO:0000255" key="1">
    <source>
        <dbReference type="HAMAP-Rule" id="MF_00071"/>
    </source>
</evidence>
<evidence type="ECO:0000305" key="2"/>
<keyword id="KW-0997">Cell inner membrane</keyword>
<keyword id="KW-1003">Cell membrane</keyword>
<keyword id="KW-0342">GTP-binding</keyword>
<keyword id="KW-0378">Hydrolase</keyword>
<keyword id="KW-0472">Membrane</keyword>
<keyword id="KW-0547">Nucleotide-binding</keyword>
<keyword id="KW-0648">Protein biosynthesis</keyword>
<keyword id="KW-1185">Reference proteome</keyword>
<gene>
    <name evidence="1" type="primary">lepA</name>
    <name type="ordered locus">Bd0851</name>
</gene>
<dbReference type="EC" id="3.6.5.n1" evidence="1"/>
<dbReference type="EMBL" id="BX842648">
    <property type="protein sequence ID" value="CAE78796.1"/>
    <property type="status" value="ALT_INIT"/>
    <property type="molecule type" value="Genomic_DNA"/>
</dbReference>
<dbReference type="RefSeq" id="WP_038451587.1">
    <property type="nucleotide sequence ID" value="NC_005363.1"/>
</dbReference>
<dbReference type="SMR" id="P60930"/>
<dbReference type="STRING" id="264462.Bd0851"/>
<dbReference type="GeneID" id="93011923"/>
<dbReference type="KEGG" id="bba:Bd0851"/>
<dbReference type="eggNOG" id="COG0481">
    <property type="taxonomic scope" value="Bacteria"/>
</dbReference>
<dbReference type="HOGENOM" id="CLU_009995_3_3_7"/>
<dbReference type="Proteomes" id="UP000008080">
    <property type="component" value="Chromosome"/>
</dbReference>
<dbReference type="GO" id="GO:0005886">
    <property type="term" value="C:plasma membrane"/>
    <property type="evidence" value="ECO:0007669"/>
    <property type="project" value="UniProtKB-SubCell"/>
</dbReference>
<dbReference type="GO" id="GO:0005525">
    <property type="term" value="F:GTP binding"/>
    <property type="evidence" value="ECO:0007669"/>
    <property type="project" value="UniProtKB-UniRule"/>
</dbReference>
<dbReference type="GO" id="GO:0003924">
    <property type="term" value="F:GTPase activity"/>
    <property type="evidence" value="ECO:0007669"/>
    <property type="project" value="UniProtKB-UniRule"/>
</dbReference>
<dbReference type="GO" id="GO:0043022">
    <property type="term" value="F:ribosome binding"/>
    <property type="evidence" value="ECO:0007669"/>
    <property type="project" value="UniProtKB-UniRule"/>
</dbReference>
<dbReference type="GO" id="GO:0003746">
    <property type="term" value="F:translation elongation factor activity"/>
    <property type="evidence" value="ECO:0007669"/>
    <property type="project" value="UniProtKB-UniRule"/>
</dbReference>
<dbReference type="GO" id="GO:0045727">
    <property type="term" value="P:positive regulation of translation"/>
    <property type="evidence" value="ECO:0007669"/>
    <property type="project" value="UniProtKB-UniRule"/>
</dbReference>
<dbReference type="CDD" id="cd03699">
    <property type="entry name" value="EF4_II"/>
    <property type="match status" value="1"/>
</dbReference>
<dbReference type="CDD" id="cd16260">
    <property type="entry name" value="EF4_III"/>
    <property type="match status" value="1"/>
</dbReference>
<dbReference type="CDD" id="cd01890">
    <property type="entry name" value="LepA"/>
    <property type="match status" value="1"/>
</dbReference>
<dbReference type="CDD" id="cd03709">
    <property type="entry name" value="lepA_C"/>
    <property type="match status" value="1"/>
</dbReference>
<dbReference type="FunFam" id="3.40.50.300:FF:000078">
    <property type="entry name" value="Elongation factor 4"/>
    <property type="match status" value="1"/>
</dbReference>
<dbReference type="FunFam" id="2.40.30.10:FF:000015">
    <property type="entry name" value="Translation factor GUF1, mitochondrial"/>
    <property type="match status" value="1"/>
</dbReference>
<dbReference type="FunFam" id="3.30.70.240:FF:000007">
    <property type="entry name" value="Translation factor GUF1, mitochondrial"/>
    <property type="match status" value="1"/>
</dbReference>
<dbReference type="FunFam" id="3.30.70.2570:FF:000001">
    <property type="entry name" value="Translation factor GUF1, mitochondrial"/>
    <property type="match status" value="1"/>
</dbReference>
<dbReference type="FunFam" id="3.30.70.870:FF:000004">
    <property type="entry name" value="Translation factor GUF1, mitochondrial"/>
    <property type="match status" value="1"/>
</dbReference>
<dbReference type="Gene3D" id="3.30.70.240">
    <property type="match status" value="1"/>
</dbReference>
<dbReference type="Gene3D" id="3.30.70.2570">
    <property type="entry name" value="Elongation factor 4, C-terminal domain"/>
    <property type="match status" value="1"/>
</dbReference>
<dbReference type="Gene3D" id="3.30.70.870">
    <property type="entry name" value="Elongation Factor G (Translational Gtpase), domain 3"/>
    <property type="match status" value="1"/>
</dbReference>
<dbReference type="Gene3D" id="3.40.50.300">
    <property type="entry name" value="P-loop containing nucleotide triphosphate hydrolases"/>
    <property type="match status" value="1"/>
</dbReference>
<dbReference type="Gene3D" id="2.40.30.10">
    <property type="entry name" value="Translation factors"/>
    <property type="match status" value="1"/>
</dbReference>
<dbReference type="HAMAP" id="MF_00071">
    <property type="entry name" value="LepA"/>
    <property type="match status" value="1"/>
</dbReference>
<dbReference type="InterPro" id="IPR006297">
    <property type="entry name" value="EF-4"/>
</dbReference>
<dbReference type="InterPro" id="IPR035647">
    <property type="entry name" value="EFG_III/V"/>
</dbReference>
<dbReference type="InterPro" id="IPR000640">
    <property type="entry name" value="EFG_V-like"/>
</dbReference>
<dbReference type="InterPro" id="IPR004161">
    <property type="entry name" value="EFTu-like_2"/>
</dbReference>
<dbReference type="InterPro" id="IPR031157">
    <property type="entry name" value="G_TR_CS"/>
</dbReference>
<dbReference type="InterPro" id="IPR038363">
    <property type="entry name" value="LepA_C_sf"/>
</dbReference>
<dbReference type="InterPro" id="IPR013842">
    <property type="entry name" value="LepA_CTD"/>
</dbReference>
<dbReference type="InterPro" id="IPR035654">
    <property type="entry name" value="LepA_IV"/>
</dbReference>
<dbReference type="InterPro" id="IPR027417">
    <property type="entry name" value="P-loop_NTPase"/>
</dbReference>
<dbReference type="InterPro" id="IPR005225">
    <property type="entry name" value="Small_GTP-bd"/>
</dbReference>
<dbReference type="InterPro" id="IPR000795">
    <property type="entry name" value="T_Tr_GTP-bd_dom"/>
</dbReference>
<dbReference type="NCBIfam" id="TIGR01393">
    <property type="entry name" value="lepA"/>
    <property type="match status" value="1"/>
</dbReference>
<dbReference type="NCBIfam" id="TIGR00231">
    <property type="entry name" value="small_GTP"/>
    <property type="match status" value="1"/>
</dbReference>
<dbReference type="PANTHER" id="PTHR43512:SF4">
    <property type="entry name" value="TRANSLATION FACTOR GUF1 HOMOLOG, CHLOROPLASTIC"/>
    <property type="match status" value="1"/>
</dbReference>
<dbReference type="PANTHER" id="PTHR43512">
    <property type="entry name" value="TRANSLATION FACTOR GUF1-RELATED"/>
    <property type="match status" value="1"/>
</dbReference>
<dbReference type="Pfam" id="PF00679">
    <property type="entry name" value="EFG_C"/>
    <property type="match status" value="1"/>
</dbReference>
<dbReference type="Pfam" id="PF00009">
    <property type="entry name" value="GTP_EFTU"/>
    <property type="match status" value="1"/>
</dbReference>
<dbReference type="Pfam" id="PF03144">
    <property type="entry name" value="GTP_EFTU_D2"/>
    <property type="match status" value="1"/>
</dbReference>
<dbReference type="Pfam" id="PF06421">
    <property type="entry name" value="LepA_C"/>
    <property type="match status" value="1"/>
</dbReference>
<dbReference type="PRINTS" id="PR00315">
    <property type="entry name" value="ELONGATNFCT"/>
</dbReference>
<dbReference type="SMART" id="SM00838">
    <property type="entry name" value="EFG_C"/>
    <property type="match status" value="1"/>
</dbReference>
<dbReference type="SUPFAM" id="SSF54980">
    <property type="entry name" value="EF-G C-terminal domain-like"/>
    <property type="match status" value="2"/>
</dbReference>
<dbReference type="SUPFAM" id="SSF52540">
    <property type="entry name" value="P-loop containing nucleoside triphosphate hydrolases"/>
    <property type="match status" value="1"/>
</dbReference>
<dbReference type="PROSITE" id="PS00301">
    <property type="entry name" value="G_TR_1"/>
    <property type="match status" value="1"/>
</dbReference>
<dbReference type="PROSITE" id="PS51722">
    <property type="entry name" value="G_TR_2"/>
    <property type="match status" value="1"/>
</dbReference>
<feature type="chain" id="PRO_0000176236" description="Elongation factor 4">
    <location>
        <begin position="1"/>
        <end position="599"/>
    </location>
</feature>
<feature type="domain" description="tr-type G">
    <location>
        <begin position="4"/>
        <end position="186"/>
    </location>
</feature>
<feature type="binding site" evidence="1">
    <location>
        <begin position="16"/>
        <end position="21"/>
    </location>
    <ligand>
        <name>GTP</name>
        <dbReference type="ChEBI" id="CHEBI:37565"/>
    </ligand>
</feature>
<feature type="binding site" evidence="1">
    <location>
        <begin position="133"/>
        <end position="136"/>
    </location>
    <ligand>
        <name>GTP</name>
        <dbReference type="ChEBI" id="CHEBI:37565"/>
    </ligand>
</feature>
<reference key="1">
    <citation type="journal article" date="2004" name="Science">
        <title>A predator unmasked: life cycle of Bdellovibrio bacteriovorus from a genomic perspective.</title>
        <authorList>
            <person name="Rendulic S."/>
            <person name="Jagtap P."/>
            <person name="Rosinus A."/>
            <person name="Eppinger M."/>
            <person name="Baar C."/>
            <person name="Lanz C."/>
            <person name="Keller H."/>
            <person name="Lambert C."/>
            <person name="Evans K.J."/>
            <person name="Goesmann A."/>
            <person name="Meyer F."/>
            <person name="Sockett R.E."/>
            <person name="Schuster S.C."/>
        </authorList>
    </citation>
    <scope>NUCLEOTIDE SEQUENCE [LARGE SCALE GENOMIC DNA]</scope>
    <source>
        <strain>ATCC 15356 / DSM 50701 / NCIMB 9529 / HD100</strain>
    </source>
</reference>
<organism>
    <name type="scientific">Bdellovibrio bacteriovorus (strain ATCC 15356 / DSM 50701 / NCIMB 9529 / HD100)</name>
    <dbReference type="NCBI Taxonomy" id="264462"/>
    <lineage>
        <taxon>Bacteria</taxon>
        <taxon>Pseudomonadati</taxon>
        <taxon>Bdellovibrionota</taxon>
        <taxon>Bdellovibrionia</taxon>
        <taxon>Bdellovibrionales</taxon>
        <taxon>Pseudobdellovibrionaceae</taxon>
        <taxon>Bdellovibrio</taxon>
    </lineage>
</organism>
<proteinExistence type="inferred from homology"/>
<comment type="function">
    <text evidence="1">Required for accurate and efficient protein synthesis under certain stress conditions. May act as a fidelity factor of the translation reaction, by catalyzing a one-codon backward translocation of tRNAs on improperly translocated ribosomes. Back-translocation proceeds from a post-translocation (POST) complex to a pre-translocation (PRE) complex, thus giving elongation factor G a second chance to translocate the tRNAs correctly. Binds to ribosomes in a GTP-dependent manner.</text>
</comment>
<comment type="catalytic activity">
    <reaction evidence="1">
        <text>GTP + H2O = GDP + phosphate + H(+)</text>
        <dbReference type="Rhea" id="RHEA:19669"/>
        <dbReference type="ChEBI" id="CHEBI:15377"/>
        <dbReference type="ChEBI" id="CHEBI:15378"/>
        <dbReference type="ChEBI" id="CHEBI:37565"/>
        <dbReference type="ChEBI" id="CHEBI:43474"/>
        <dbReference type="ChEBI" id="CHEBI:58189"/>
        <dbReference type="EC" id="3.6.5.n1"/>
    </reaction>
</comment>
<comment type="subcellular location">
    <subcellularLocation>
        <location evidence="1">Cell inner membrane</location>
        <topology evidence="1">Peripheral membrane protein</topology>
        <orientation evidence="1">Cytoplasmic side</orientation>
    </subcellularLocation>
</comment>
<comment type="similarity">
    <text evidence="1">Belongs to the TRAFAC class translation factor GTPase superfamily. Classic translation factor GTPase family. LepA subfamily.</text>
</comment>
<comment type="sequence caution" evidence="2">
    <conflict type="erroneous initiation">
        <sequence resource="EMBL-CDS" id="CAE78796"/>
    </conflict>
</comment>
<sequence>MDPKYIRNFSIIAHIDHGKSTLADGLLSATGSLSDREKKDQFLDNMELERERGITIKAQTVCLDFKSKDGNMYQINLIDTPGHVDFSYEVSRSLAACEGAILVVDAAQGVEAQTLANVYLAMENNLEIIPVLNKIDLPSADPEGVAKQIEDTVGLDCTGIIHASAKEKIGITDILEAIVEKVPPPKADRSLTPRALIFDSWFDAYQGVVVLVRMVDGVIKKGDKIKFMATDRDYEVLRMGKYKPFPLMQDVLEAGEVGFIVCGIKDIRDVQVGDTVTSAKHPATQPLAGFQRIKPMVFAGIFPVVASEYENLKDALDKLCLNDSSLTFEVEKSAALGFGYRCGFLGLLHMEIVQERLEREFNLDLITTAPTVVYRITKTDGTEMMLENPSGMPVETQIAKFEEPYVKVTLHTPTDYIGGILKLCEDKRGIQQKMEYVTDKKVIIEYKLPMNEMVMDFYDRLKSISKGYASLEYEFVGFEESDLVKLDILINGEAIDALSLIVHRSKAQNRGRLLAEKMKELIPRQMYQVAIQAAIGAKIIARETLGAIRKDVTAKCYGGDISRKRKLLEKQKEGKKRMKAIGHVEVPQEAFLAILKVED</sequence>
<accession>P60930</accession>
<protein>
    <recommendedName>
        <fullName evidence="1">Elongation factor 4</fullName>
        <shortName evidence="1">EF-4</shortName>
        <ecNumber evidence="1">3.6.5.n1</ecNumber>
    </recommendedName>
    <alternativeName>
        <fullName evidence="1">Ribosomal back-translocase LepA</fullName>
    </alternativeName>
</protein>
<name>LEPA_BDEBA</name>